<dbReference type="EMBL" id="AL939125">
    <property type="protein sequence ID" value="CAA15875.1"/>
    <property type="molecule type" value="Genomic_DNA"/>
</dbReference>
<dbReference type="PIR" id="T35139">
    <property type="entry name" value="T35139"/>
</dbReference>
<dbReference type="RefSeq" id="NP_629894.1">
    <property type="nucleotide sequence ID" value="NC_003888.3"/>
</dbReference>
<dbReference type="RefSeq" id="WP_011030442.1">
    <property type="nucleotide sequence ID" value="NZ_VNID01000007.1"/>
</dbReference>
<dbReference type="SMR" id="O50487"/>
<dbReference type="STRING" id="100226.gene:17763429"/>
<dbReference type="PaxDb" id="100226-SCO5769"/>
<dbReference type="KEGG" id="sco:SCO5769"/>
<dbReference type="PATRIC" id="fig|100226.15.peg.5858"/>
<dbReference type="eggNOG" id="COG0468">
    <property type="taxonomic scope" value="Bacteria"/>
</dbReference>
<dbReference type="HOGENOM" id="CLU_040469_3_2_11"/>
<dbReference type="InParanoid" id="O50487"/>
<dbReference type="OrthoDB" id="9776733at2"/>
<dbReference type="PhylomeDB" id="O50487"/>
<dbReference type="Proteomes" id="UP000001973">
    <property type="component" value="Chromosome"/>
</dbReference>
<dbReference type="GO" id="GO:0005737">
    <property type="term" value="C:cytoplasm"/>
    <property type="evidence" value="ECO:0007669"/>
    <property type="project" value="UniProtKB-SubCell"/>
</dbReference>
<dbReference type="GO" id="GO:0005524">
    <property type="term" value="F:ATP binding"/>
    <property type="evidence" value="ECO:0007669"/>
    <property type="project" value="UniProtKB-UniRule"/>
</dbReference>
<dbReference type="GO" id="GO:0016887">
    <property type="term" value="F:ATP hydrolysis activity"/>
    <property type="evidence" value="ECO:0007669"/>
    <property type="project" value="InterPro"/>
</dbReference>
<dbReference type="GO" id="GO:0140664">
    <property type="term" value="F:ATP-dependent DNA damage sensor activity"/>
    <property type="evidence" value="ECO:0007669"/>
    <property type="project" value="InterPro"/>
</dbReference>
<dbReference type="GO" id="GO:0003684">
    <property type="term" value="F:damaged DNA binding"/>
    <property type="evidence" value="ECO:0007669"/>
    <property type="project" value="UniProtKB-UniRule"/>
</dbReference>
<dbReference type="GO" id="GO:0003697">
    <property type="term" value="F:single-stranded DNA binding"/>
    <property type="evidence" value="ECO:0007669"/>
    <property type="project" value="UniProtKB-UniRule"/>
</dbReference>
<dbReference type="GO" id="GO:0006310">
    <property type="term" value="P:DNA recombination"/>
    <property type="evidence" value="ECO:0007669"/>
    <property type="project" value="UniProtKB-UniRule"/>
</dbReference>
<dbReference type="GO" id="GO:0006281">
    <property type="term" value="P:DNA repair"/>
    <property type="evidence" value="ECO:0007669"/>
    <property type="project" value="UniProtKB-UniRule"/>
</dbReference>
<dbReference type="GO" id="GO:0009432">
    <property type="term" value="P:SOS response"/>
    <property type="evidence" value="ECO:0007669"/>
    <property type="project" value="UniProtKB-UniRule"/>
</dbReference>
<dbReference type="CDD" id="cd00983">
    <property type="entry name" value="RecA"/>
    <property type="match status" value="1"/>
</dbReference>
<dbReference type="FunFam" id="3.40.50.300:FF:000087">
    <property type="entry name" value="Recombinase RecA"/>
    <property type="match status" value="1"/>
</dbReference>
<dbReference type="Gene3D" id="3.40.50.300">
    <property type="entry name" value="P-loop containing nucleotide triphosphate hydrolases"/>
    <property type="match status" value="1"/>
</dbReference>
<dbReference type="HAMAP" id="MF_00268">
    <property type="entry name" value="RecA"/>
    <property type="match status" value="1"/>
</dbReference>
<dbReference type="InterPro" id="IPR003593">
    <property type="entry name" value="AAA+_ATPase"/>
</dbReference>
<dbReference type="InterPro" id="IPR013765">
    <property type="entry name" value="DNA_recomb/repair_RecA"/>
</dbReference>
<dbReference type="InterPro" id="IPR020584">
    <property type="entry name" value="DNA_recomb/repair_RecA_CS"/>
</dbReference>
<dbReference type="InterPro" id="IPR027417">
    <property type="entry name" value="P-loop_NTPase"/>
</dbReference>
<dbReference type="InterPro" id="IPR049261">
    <property type="entry name" value="RecA-like_C"/>
</dbReference>
<dbReference type="InterPro" id="IPR049428">
    <property type="entry name" value="RecA-like_N"/>
</dbReference>
<dbReference type="InterPro" id="IPR020588">
    <property type="entry name" value="RecA_ATP-bd"/>
</dbReference>
<dbReference type="InterPro" id="IPR023400">
    <property type="entry name" value="RecA_C_sf"/>
</dbReference>
<dbReference type="InterPro" id="IPR020587">
    <property type="entry name" value="RecA_monomer-monomer_interface"/>
</dbReference>
<dbReference type="NCBIfam" id="TIGR02012">
    <property type="entry name" value="tigrfam_recA"/>
    <property type="match status" value="1"/>
</dbReference>
<dbReference type="PANTHER" id="PTHR45900:SF1">
    <property type="entry name" value="MITOCHONDRIAL DNA REPAIR PROTEIN RECA HOMOLOG-RELATED"/>
    <property type="match status" value="1"/>
</dbReference>
<dbReference type="PANTHER" id="PTHR45900">
    <property type="entry name" value="RECA"/>
    <property type="match status" value="1"/>
</dbReference>
<dbReference type="Pfam" id="PF00154">
    <property type="entry name" value="RecA"/>
    <property type="match status" value="1"/>
</dbReference>
<dbReference type="Pfam" id="PF21096">
    <property type="entry name" value="RecA_C"/>
    <property type="match status" value="1"/>
</dbReference>
<dbReference type="PRINTS" id="PR00142">
    <property type="entry name" value="RECA"/>
</dbReference>
<dbReference type="SMART" id="SM00382">
    <property type="entry name" value="AAA"/>
    <property type="match status" value="1"/>
</dbReference>
<dbReference type="SUPFAM" id="SSF52540">
    <property type="entry name" value="P-loop containing nucleoside triphosphate hydrolases"/>
    <property type="match status" value="1"/>
</dbReference>
<dbReference type="SUPFAM" id="SSF54752">
    <property type="entry name" value="RecA protein, C-terminal domain"/>
    <property type="match status" value="1"/>
</dbReference>
<dbReference type="PROSITE" id="PS00321">
    <property type="entry name" value="RECA_1"/>
    <property type="match status" value="1"/>
</dbReference>
<dbReference type="PROSITE" id="PS50162">
    <property type="entry name" value="RECA_2"/>
    <property type="match status" value="1"/>
</dbReference>
<dbReference type="PROSITE" id="PS50163">
    <property type="entry name" value="RECA_3"/>
    <property type="match status" value="1"/>
</dbReference>
<feature type="chain" id="PRO_0000122853" description="Protein RecA">
    <location>
        <begin position="1"/>
        <end position="374"/>
    </location>
</feature>
<feature type="region of interest" description="Disordered" evidence="2">
    <location>
        <begin position="326"/>
        <end position="374"/>
    </location>
</feature>
<feature type="compositionally biased region" description="Low complexity" evidence="2">
    <location>
        <begin position="338"/>
        <end position="374"/>
    </location>
</feature>
<feature type="binding site" evidence="1">
    <location>
        <begin position="66"/>
        <end position="73"/>
    </location>
    <ligand>
        <name>ATP</name>
        <dbReference type="ChEBI" id="CHEBI:30616"/>
    </ligand>
</feature>
<sequence>MAGTDREKALDAALAQIERQFGKGAVMRMGDRTNEPIEVIPTGSTALDVALGVGGIPRGRVVEVYGPESSGKTTLTLHAVANAQKAGGQVAFVDAEHALDPEYAKKLGVDIDNLILSQPDNGEQALEIVDMLVRSGALDLIVIDSVAALVPRAEIEGEMGDSHVGLQARLMSQALRKITSALNQSKTTAIFINQLREKIGVMFGSPETTTGGRALKFYASVRLDIRRIETLKDGTDAVGNRTRVKVVKNKVAPPFKQAEFDILYGQGISREGGLIDMGVENGFVRKAGAWYTYEGDQLGQGKENARNFLKDNPDLANEIEKKIKQKLGVGVHPEESATEPGADAASAAPADAAPAVPAPTTAKATKSKATAAKS</sequence>
<accession>O50487</accession>
<comment type="function">
    <text evidence="1">Can catalyze the hydrolysis of ATP in the presence of single-stranded DNA, the ATP-dependent uptake of single-stranded DNA by duplex DNA, and the ATP-dependent hybridization of homologous single-stranded DNAs. It interacts with LexA causing its activation and leading to its autocatalytic cleavage.</text>
</comment>
<comment type="subcellular location">
    <subcellularLocation>
        <location evidence="1">Cytoplasm</location>
    </subcellularLocation>
</comment>
<comment type="similarity">
    <text evidence="1">Belongs to the RecA family.</text>
</comment>
<protein>
    <recommendedName>
        <fullName evidence="1">Protein RecA</fullName>
    </recommendedName>
    <alternativeName>
        <fullName evidence="1">Recombinase A</fullName>
    </alternativeName>
</protein>
<evidence type="ECO:0000255" key="1">
    <source>
        <dbReference type="HAMAP-Rule" id="MF_00268"/>
    </source>
</evidence>
<evidence type="ECO:0000256" key="2">
    <source>
        <dbReference type="SAM" id="MobiDB-lite"/>
    </source>
</evidence>
<organism>
    <name type="scientific">Streptomyces coelicolor (strain ATCC BAA-471 / A3(2) / M145)</name>
    <dbReference type="NCBI Taxonomy" id="100226"/>
    <lineage>
        <taxon>Bacteria</taxon>
        <taxon>Bacillati</taxon>
        <taxon>Actinomycetota</taxon>
        <taxon>Actinomycetes</taxon>
        <taxon>Kitasatosporales</taxon>
        <taxon>Streptomycetaceae</taxon>
        <taxon>Streptomyces</taxon>
        <taxon>Streptomyces albidoflavus group</taxon>
    </lineage>
</organism>
<gene>
    <name evidence="1" type="primary">recA</name>
    <name type="ordered locus">SCO5769</name>
    <name type="ORF">SC4H8.08</name>
</gene>
<proteinExistence type="inferred from homology"/>
<keyword id="KW-0067">ATP-binding</keyword>
<keyword id="KW-0963">Cytoplasm</keyword>
<keyword id="KW-0227">DNA damage</keyword>
<keyword id="KW-0233">DNA recombination</keyword>
<keyword id="KW-0234">DNA repair</keyword>
<keyword id="KW-0238">DNA-binding</keyword>
<keyword id="KW-0547">Nucleotide-binding</keyword>
<keyword id="KW-1185">Reference proteome</keyword>
<keyword id="KW-0742">SOS response</keyword>
<reference key="1">
    <citation type="journal article" date="2002" name="Nature">
        <title>Complete genome sequence of the model actinomycete Streptomyces coelicolor A3(2).</title>
        <authorList>
            <person name="Bentley S.D."/>
            <person name="Chater K.F."/>
            <person name="Cerdeno-Tarraga A.-M."/>
            <person name="Challis G.L."/>
            <person name="Thomson N.R."/>
            <person name="James K.D."/>
            <person name="Harris D.E."/>
            <person name="Quail M.A."/>
            <person name="Kieser H."/>
            <person name="Harper D."/>
            <person name="Bateman A."/>
            <person name="Brown S."/>
            <person name="Chandra G."/>
            <person name="Chen C.W."/>
            <person name="Collins M."/>
            <person name="Cronin A."/>
            <person name="Fraser A."/>
            <person name="Goble A."/>
            <person name="Hidalgo J."/>
            <person name="Hornsby T."/>
            <person name="Howarth S."/>
            <person name="Huang C.-H."/>
            <person name="Kieser T."/>
            <person name="Larke L."/>
            <person name="Murphy L.D."/>
            <person name="Oliver K."/>
            <person name="O'Neil S."/>
            <person name="Rabbinowitsch E."/>
            <person name="Rajandream M.A."/>
            <person name="Rutherford K.M."/>
            <person name="Rutter S."/>
            <person name="Seeger K."/>
            <person name="Saunders D."/>
            <person name="Sharp S."/>
            <person name="Squares R."/>
            <person name="Squares S."/>
            <person name="Taylor K."/>
            <person name="Warren T."/>
            <person name="Wietzorrek A."/>
            <person name="Woodward J.R."/>
            <person name="Barrell B.G."/>
            <person name="Parkhill J."/>
            <person name="Hopwood D.A."/>
        </authorList>
    </citation>
    <scope>NUCLEOTIDE SEQUENCE [LARGE SCALE GENOMIC DNA]</scope>
    <source>
        <strain>ATCC BAA-471 / A3(2) / M145</strain>
    </source>
</reference>
<name>RECA_STRCO</name>